<reference key="1">
    <citation type="journal article" date="2004" name="J. Bacteriol.">
        <title>Complete genome sequence of Rickettsia typhi and comparison with sequences of other Rickettsiae.</title>
        <authorList>
            <person name="McLeod M.P."/>
            <person name="Qin X."/>
            <person name="Karpathy S.E."/>
            <person name="Gioia J."/>
            <person name="Highlander S.K."/>
            <person name="Fox G.E."/>
            <person name="McNeill T.Z."/>
            <person name="Jiang H."/>
            <person name="Muzny D."/>
            <person name="Jacob L.S."/>
            <person name="Hawes A.C."/>
            <person name="Sodergren E."/>
            <person name="Gill R."/>
            <person name="Hume J."/>
            <person name="Morgan M."/>
            <person name="Fan G."/>
            <person name="Amin A.G."/>
            <person name="Gibbs R.A."/>
            <person name="Hong C."/>
            <person name="Yu X.-J."/>
            <person name="Walker D.H."/>
            <person name="Weinstock G.M."/>
        </authorList>
    </citation>
    <scope>NUCLEOTIDE SEQUENCE [LARGE SCALE GENOMIC DNA]</scope>
    <source>
        <strain>ATCC VR-144 / Wilmington</strain>
    </source>
</reference>
<proteinExistence type="inferred from homology"/>
<protein>
    <recommendedName>
        <fullName>NADH-quinone oxidoreductase subunit F</fullName>
        <ecNumber>7.1.1.-</ecNumber>
    </recommendedName>
    <alternativeName>
        <fullName>NADH dehydrogenase I subunit F</fullName>
    </alternativeName>
    <alternativeName>
        <fullName>NDH-1 subunit F</fullName>
    </alternativeName>
</protein>
<keyword id="KW-0004">4Fe-4S</keyword>
<keyword id="KW-0285">Flavoprotein</keyword>
<keyword id="KW-0288">FMN</keyword>
<keyword id="KW-0408">Iron</keyword>
<keyword id="KW-0411">Iron-sulfur</keyword>
<keyword id="KW-0479">Metal-binding</keyword>
<keyword id="KW-0520">NAD</keyword>
<keyword id="KW-0874">Quinone</keyword>
<keyword id="KW-1278">Translocase</keyword>
<dbReference type="EC" id="7.1.1.-"/>
<dbReference type="EMBL" id="AE017197">
    <property type="protein sequence ID" value="AAU03509.1"/>
    <property type="molecule type" value="Genomic_DNA"/>
</dbReference>
<dbReference type="RefSeq" id="WP_011190496.1">
    <property type="nucleotide sequence ID" value="NC_006142.1"/>
</dbReference>
<dbReference type="SMR" id="Q68XY3"/>
<dbReference type="KEGG" id="rty:RT0021"/>
<dbReference type="eggNOG" id="COG1894">
    <property type="taxonomic scope" value="Bacteria"/>
</dbReference>
<dbReference type="HOGENOM" id="CLU_014881_0_1_5"/>
<dbReference type="OrthoDB" id="9761899at2"/>
<dbReference type="Proteomes" id="UP000000604">
    <property type="component" value="Chromosome"/>
</dbReference>
<dbReference type="GO" id="GO:0051539">
    <property type="term" value="F:4 iron, 4 sulfur cluster binding"/>
    <property type="evidence" value="ECO:0007669"/>
    <property type="project" value="UniProtKB-KW"/>
</dbReference>
<dbReference type="GO" id="GO:0010181">
    <property type="term" value="F:FMN binding"/>
    <property type="evidence" value="ECO:0007669"/>
    <property type="project" value="InterPro"/>
</dbReference>
<dbReference type="GO" id="GO:0046872">
    <property type="term" value="F:metal ion binding"/>
    <property type="evidence" value="ECO:0007669"/>
    <property type="project" value="UniProtKB-KW"/>
</dbReference>
<dbReference type="GO" id="GO:0051287">
    <property type="term" value="F:NAD binding"/>
    <property type="evidence" value="ECO:0007669"/>
    <property type="project" value="InterPro"/>
</dbReference>
<dbReference type="GO" id="GO:0008137">
    <property type="term" value="F:NADH dehydrogenase (ubiquinone) activity"/>
    <property type="evidence" value="ECO:0007669"/>
    <property type="project" value="InterPro"/>
</dbReference>
<dbReference type="GO" id="GO:0048038">
    <property type="term" value="F:quinone binding"/>
    <property type="evidence" value="ECO:0007669"/>
    <property type="project" value="UniProtKB-KW"/>
</dbReference>
<dbReference type="FunFam" id="1.20.1440.230:FF:000001">
    <property type="entry name" value="Mitochondrial NADH dehydrogenase flavoprotein 1"/>
    <property type="match status" value="1"/>
</dbReference>
<dbReference type="FunFam" id="3.10.20.600:FF:000001">
    <property type="entry name" value="NADH dehydrogenase [ubiquinone] flavoprotein 1, mitochondrial"/>
    <property type="match status" value="1"/>
</dbReference>
<dbReference type="FunFam" id="3.40.50.11540:FF:000001">
    <property type="entry name" value="NADH dehydrogenase [ubiquinone] flavoprotein 1, mitochondrial"/>
    <property type="match status" value="1"/>
</dbReference>
<dbReference type="Gene3D" id="3.10.20.600">
    <property type="match status" value="1"/>
</dbReference>
<dbReference type="Gene3D" id="3.40.50.11540">
    <property type="entry name" value="NADH-ubiquinone oxidoreductase 51kDa subunit"/>
    <property type="match status" value="1"/>
</dbReference>
<dbReference type="Gene3D" id="1.20.1440.230">
    <property type="entry name" value="NADH-ubiquinone oxidoreductase 51kDa subunit, iron-sulphur binding domain"/>
    <property type="match status" value="1"/>
</dbReference>
<dbReference type="InterPro" id="IPR050837">
    <property type="entry name" value="ComplexI_51kDa_subunit"/>
</dbReference>
<dbReference type="InterPro" id="IPR001949">
    <property type="entry name" value="NADH-UbQ_OxRdtase_51kDa_CS"/>
</dbReference>
<dbReference type="InterPro" id="IPR011537">
    <property type="entry name" value="NADH-UbQ_OxRdtase_suF"/>
</dbReference>
<dbReference type="InterPro" id="IPR011538">
    <property type="entry name" value="Nuo51_FMN-bd"/>
</dbReference>
<dbReference type="InterPro" id="IPR037225">
    <property type="entry name" value="Nuo51_FMN-bd_sf"/>
</dbReference>
<dbReference type="InterPro" id="IPR019575">
    <property type="entry name" value="Nuop51_4Fe4S-bd"/>
</dbReference>
<dbReference type="InterPro" id="IPR037207">
    <property type="entry name" value="Nuop51_4Fe4S-bd_sf"/>
</dbReference>
<dbReference type="InterPro" id="IPR054765">
    <property type="entry name" value="SLBB_dom"/>
</dbReference>
<dbReference type="NCBIfam" id="TIGR01959">
    <property type="entry name" value="nuoF_fam"/>
    <property type="match status" value="1"/>
</dbReference>
<dbReference type="NCBIfam" id="NF010120">
    <property type="entry name" value="PRK13596.1"/>
    <property type="match status" value="1"/>
</dbReference>
<dbReference type="PANTHER" id="PTHR11780:SF10">
    <property type="entry name" value="NADH DEHYDROGENASE [UBIQUINONE] FLAVOPROTEIN 1, MITOCHONDRIAL"/>
    <property type="match status" value="1"/>
</dbReference>
<dbReference type="PANTHER" id="PTHR11780">
    <property type="entry name" value="NADH-UBIQUINONE OXIDOREDUCTASE FLAVOPROTEIN 1 NDUFV1"/>
    <property type="match status" value="1"/>
</dbReference>
<dbReference type="Pfam" id="PF01512">
    <property type="entry name" value="Complex1_51K"/>
    <property type="match status" value="1"/>
</dbReference>
<dbReference type="Pfam" id="PF10589">
    <property type="entry name" value="NADH_4Fe-4S"/>
    <property type="match status" value="1"/>
</dbReference>
<dbReference type="Pfam" id="PF22461">
    <property type="entry name" value="SLBB_2"/>
    <property type="match status" value="1"/>
</dbReference>
<dbReference type="SMART" id="SM00928">
    <property type="entry name" value="NADH_4Fe-4S"/>
    <property type="match status" value="1"/>
</dbReference>
<dbReference type="SUPFAM" id="SSF142019">
    <property type="entry name" value="Nqo1 FMN-binding domain-like"/>
    <property type="match status" value="1"/>
</dbReference>
<dbReference type="SUPFAM" id="SSF142984">
    <property type="entry name" value="Nqo1 middle domain-like"/>
    <property type="match status" value="1"/>
</dbReference>
<dbReference type="SUPFAM" id="SSF140490">
    <property type="entry name" value="Nqo1C-terminal domain-like"/>
    <property type="match status" value="1"/>
</dbReference>
<dbReference type="PROSITE" id="PS00644">
    <property type="entry name" value="COMPLEX1_51K_1"/>
    <property type="match status" value="1"/>
</dbReference>
<dbReference type="PROSITE" id="PS00645">
    <property type="entry name" value="COMPLEX1_51K_2"/>
    <property type="match status" value="1"/>
</dbReference>
<accession>Q68XY3</accession>
<evidence type="ECO:0000250" key="1"/>
<evidence type="ECO:0000255" key="2"/>
<evidence type="ECO:0000305" key="3"/>
<name>NUOF_RICTY</name>
<gene>
    <name type="primary">nuoF</name>
    <name type="ordered locus">RT0021</name>
</gene>
<organism>
    <name type="scientific">Rickettsia typhi (strain ATCC VR-144 / Wilmington)</name>
    <dbReference type="NCBI Taxonomy" id="257363"/>
    <lineage>
        <taxon>Bacteria</taxon>
        <taxon>Pseudomonadati</taxon>
        <taxon>Pseudomonadota</taxon>
        <taxon>Alphaproteobacteria</taxon>
        <taxon>Rickettsiales</taxon>
        <taxon>Rickettsiaceae</taxon>
        <taxon>Rickettsieae</taxon>
        <taxon>Rickettsia</taxon>
        <taxon>typhus group</taxon>
    </lineage>
</organism>
<comment type="function">
    <text evidence="1">NDH-1 shuttles electrons from NADH, via FMN and iron-sulfur (Fe-S) centers, to quinones in the respiratory chain. Couples the redox reaction to proton translocation (for every two electrons transferred, four hydrogen ions are translocated across the cytoplasmic membrane), and thus conserves the redox energy in a proton gradient (By similarity).</text>
</comment>
<comment type="catalytic activity">
    <reaction>
        <text>a quinone + NADH + 5 H(+)(in) = a quinol + NAD(+) + 4 H(+)(out)</text>
        <dbReference type="Rhea" id="RHEA:57888"/>
        <dbReference type="ChEBI" id="CHEBI:15378"/>
        <dbReference type="ChEBI" id="CHEBI:24646"/>
        <dbReference type="ChEBI" id="CHEBI:57540"/>
        <dbReference type="ChEBI" id="CHEBI:57945"/>
        <dbReference type="ChEBI" id="CHEBI:132124"/>
    </reaction>
</comment>
<comment type="cofactor">
    <cofactor evidence="3">
        <name>FMN</name>
        <dbReference type="ChEBI" id="CHEBI:58210"/>
    </cofactor>
    <text evidence="3">Binds 1 FMN.</text>
</comment>
<comment type="cofactor">
    <cofactor evidence="3">
        <name>[4Fe-4S] cluster</name>
        <dbReference type="ChEBI" id="CHEBI:49883"/>
    </cofactor>
    <text evidence="3">Binds 1 [4Fe-4S] cluster.</text>
</comment>
<comment type="similarity">
    <text evidence="3">Belongs to the complex I 51 kDa subunit family.</text>
</comment>
<sequence length="421" mass="46347">MLKEEDKIFINLYGQQSYDLKSSKKRGDWYNTKALLDKGRDFIIDEVKKSGLRGRGGAGFSTGMKWSFMPKNSEKPCYLVVNADESEPGTCKDRDILRFEPHKLIEGCLIASFAIGANNCYIYIRGEFYNEASNMQRALDEAYTEGLIGKNACGSGFDCNIYLHRGAGAYICGEETALLESLEGKKGMPRLKPPFPAGFGLYGCPTTINNVESIAVVPTILRRGASWFAAIGKPNNTGTKIFCISGHVNKPCNIEEAMGIPLKELIEKYAGGVRGGWDNLKAIIPGGASVPLLPKSLCEVEMDFDSLRTVGSGLGTGGIIVMDRSTDIIYAIARLSKFYMHESCGQCTPCREGTGWMWRVMMRLVNGNAKKTEIETLLNVTKEIEGHTICALGDAAAWPIQGLIRHFRDEIEERIKNFGIA</sequence>
<feature type="chain" id="PRO_0000274789" description="NADH-quinone oxidoreductase subunit F">
    <location>
        <begin position="1"/>
        <end position="421"/>
    </location>
</feature>
<feature type="binding site" evidence="1">
    <location>
        <begin position="54"/>
        <end position="63"/>
    </location>
    <ligand>
        <name>NAD(+)</name>
        <dbReference type="ChEBI" id="CHEBI:57540"/>
    </ligand>
</feature>
<feature type="binding site" evidence="1">
    <location>
        <begin position="166"/>
        <end position="213"/>
    </location>
    <ligand>
        <name>FMN</name>
        <dbReference type="ChEBI" id="CHEBI:58210"/>
    </ligand>
</feature>
<feature type="binding site" evidence="2">
    <location>
        <position position="344"/>
    </location>
    <ligand>
        <name>[4Fe-4S] cluster</name>
        <dbReference type="ChEBI" id="CHEBI:49883"/>
    </ligand>
</feature>
<feature type="binding site" evidence="2">
    <location>
        <position position="347"/>
    </location>
    <ligand>
        <name>[4Fe-4S] cluster</name>
        <dbReference type="ChEBI" id="CHEBI:49883"/>
    </ligand>
</feature>
<feature type="binding site" evidence="2">
    <location>
        <position position="350"/>
    </location>
    <ligand>
        <name>[4Fe-4S] cluster</name>
        <dbReference type="ChEBI" id="CHEBI:49883"/>
    </ligand>
</feature>
<feature type="binding site" evidence="2">
    <location>
        <position position="390"/>
    </location>
    <ligand>
        <name>[4Fe-4S] cluster</name>
        <dbReference type="ChEBI" id="CHEBI:49883"/>
    </ligand>
</feature>